<feature type="chain" id="PRO_0000330037" description="Zinc finger protein SNAI3">
    <location>
        <begin position="1"/>
        <end position="292"/>
    </location>
</feature>
<feature type="zinc finger region" description="C2H2-type 1" evidence="2">
    <location>
        <begin position="152"/>
        <end position="174"/>
    </location>
</feature>
<feature type="zinc finger region" description="C2H2-type 2" evidence="2">
    <location>
        <begin position="183"/>
        <end position="205"/>
    </location>
</feature>
<feature type="zinc finger region" description="C2H2-type 3" evidence="2">
    <location>
        <begin position="209"/>
        <end position="231"/>
    </location>
</feature>
<feature type="zinc finger region" description="C2H2-type 4" evidence="2">
    <location>
        <begin position="237"/>
        <end position="259"/>
    </location>
</feature>
<feature type="zinc finger region" description="C2H2-type 5; degenerate" evidence="2">
    <location>
        <begin position="265"/>
        <end position="287"/>
    </location>
</feature>
<feature type="region of interest" description="SNAG domain" evidence="1">
    <location>
        <begin position="1"/>
        <end position="20"/>
    </location>
</feature>
<reference key="1">
    <citation type="submission" date="2005-09" db="EMBL/GenBank/DDBJ databases">
        <authorList>
            <person name="Mural R.J."/>
            <person name="Istrail S."/>
            <person name="Sutton G.G."/>
            <person name="Florea L."/>
            <person name="Halpern A.L."/>
            <person name="Mobarry C.M."/>
            <person name="Lippert R."/>
            <person name="Walenz B."/>
            <person name="Shatkay H."/>
            <person name="Dew I."/>
            <person name="Miller J.R."/>
            <person name="Flanigan M.J."/>
            <person name="Edwards N.J."/>
            <person name="Bolanos R."/>
            <person name="Fasulo D."/>
            <person name="Halldorsson B.V."/>
            <person name="Hannenhalli S."/>
            <person name="Turner R."/>
            <person name="Yooseph S."/>
            <person name="Lu F."/>
            <person name="Nusskern D.R."/>
            <person name="Shue B.C."/>
            <person name="Zheng X.H."/>
            <person name="Zhong F."/>
            <person name="Delcher A.L."/>
            <person name="Huson D.H."/>
            <person name="Kravitz S.A."/>
            <person name="Mouchard L."/>
            <person name="Reinert K."/>
            <person name="Remington K.A."/>
            <person name="Clark A.G."/>
            <person name="Waterman M.S."/>
            <person name="Eichler E.E."/>
            <person name="Adams M.D."/>
            <person name="Hunkapiller M.W."/>
            <person name="Myers E.W."/>
            <person name="Venter J.C."/>
        </authorList>
    </citation>
    <scope>NUCLEOTIDE SEQUENCE [LARGE SCALE GENOMIC DNA]</scope>
</reference>
<reference key="2">
    <citation type="journal article" date="2004" name="Genome Res.">
        <title>The status, quality, and expansion of the NIH full-length cDNA project: the Mammalian Gene Collection (MGC).</title>
        <authorList>
            <consortium name="The MGC Project Team"/>
        </authorList>
    </citation>
    <scope>NUCLEOTIDE SEQUENCE [LARGE SCALE MRNA]</scope>
    <source>
        <tissue>Lung</tissue>
    </source>
</reference>
<sequence length="292" mass="32474">MPRSFLVKTHSSHRVPNYRRLETQREINGACSACGGLVVPLLPRDKEAPSVPGDLPQPWDRSSAVACISLPLLPRIEEALGASGLDALEVSEVDPRASRAAIVPLKDSLNHLNLPPLLVLPTRWSPTLGPDRHGAPEKLLGAERMPRAPGGFECFHCHKPYHTLAGLARHRQLHCHLQVGRVFTCKYCDKEYTSLGALKMHIRTHTLPCTCKICGKAFSRPWLLQGHVRTHTGEKPYACSHCSRAFADRSNLRAHLQTHSDAKKYRCRRCTKTFSRMSLLARHEESGCCPGP</sequence>
<name>SNAI3_HUMAN</name>
<keyword id="KW-0238">DNA-binding</keyword>
<keyword id="KW-0479">Metal-binding</keyword>
<keyword id="KW-0539">Nucleus</keyword>
<keyword id="KW-1267">Proteomics identification</keyword>
<keyword id="KW-1185">Reference proteome</keyword>
<keyword id="KW-0677">Repeat</keyword>
<keyword id="KW-0678">Repressor</keyword>
<keyword id="KW-0804">Transcription</keyword>
<keyword id="KW-0805">Transcription regulation</keyword>
<keyword id="KW-0862">Zinc</keyword>
<keyword id="KW-0863">Zinc-finger</keyword>
<gene>
    <name type="primary">SNAI3</name>
    <name type="synonym">ZNF293</name>
</gene>
<accession>Q3KNW1</accession>
<accession>Q86SU5</accession>
<protein>
    <recommendedName>
        <fullName>Zinc finger protein SNAI3</fullName>
    </recommendedName>
    <alternativeName>
        <fullName>Protein snail homolog 3</fullName>
    </alternativeName>
    <alternativeName>
        <fullName>Zinc finger protein 293</fullName>
    </alternativeName>
</protein>
<evidence type="ECO:0000250" key="1"/>
<evidence type="ECO:0000255" key="2">
    <source>
        <dbReference type="PROSITE-ProRule" id="PRU00042"/>
    </source>
</evidence>
<evidence type="ECO:0000305" key="3"/>
<comment type="function">
    <text evidence="1">Seems to inhibit myoblast differentiation. Transcriptional repressor of E-box-dependent transactivation of downstream myogenic bHLHs genes. Binds preferentially to the canonical E-box sequences 5'-CAGGTG-3' and 5'-CACCTG-3' (By similarity).</text>
</comment>
<comment type="subcellular location">
    <subcellularLocation>
        <location evidence="1">Nucleus</location>
    </subcellularLocation>
</comment>
<comment type="domain">
    <text evidence="1">Binds E-box via C2H2-type zinc finger domain.</text>
</comment>
<comment type="similarity">
    <text evidence="3">Belongs to the snail C2H2-type zinc-finger protein family.</text>
</comment>
<organism>
    <name type="scientific">Homo sapiens</name>
    <name type="common">Human</name>
    <dbReference type="NCBI Taxonomy" id="9606"/>
    <lineage>
        <taxon>Eukaryota</taxon>
        <taxon>Metazoa</taxon>
        <taxon>Chordata</taxon>
        <taxon>Craniata</taxon>
        <taxon>Vertebrata</taxon>
        <taxon>Euteleostomi</taxon>
        <taxon>Mammalia</taxon>
        <taxon>Eutheria</taxon>
        <taxon>Euarchontoglires</taxon>
        <taxon>Primates</taxon>
        <taxon>Haplorrhini</taxon>
        <taxon>Catarrhini</taxon>
        <taxon>Hominidae</taxon>
        <taxon>Homo</taxon>
    </lineage>
</organism>
<dbReference type="EMBL" id="CH471184">
    <property type="protein sequence ID" value="EAW66765.1"/>
    <property type="molecule type" value="Genomic_DNA"/>
</dbReference>
<dbReference type="EMBL" id="BC041461">
    <property type="protein sequence ID" value="AAH41461.1"/>
    <property type="molecule type" value="mRNA"/>
</dbReference>
<dbReference type="EMBL" id="BC107058">
    <property type="protein sequence ID" value="AAI07059.1"/>
    <property type="molecule type" value="mRNA"/>
</dbReference>
<dbReference type="CCDS" id="CCDS32505.1"/>
<dbReference type="RefSeq" id="NP_840101.1">
    <property type="nucleotide sequence ID" value="NM_178310.4"/>
</dbReference>
<dbReference type="SMR" id="Q3KNW1"/>
<dbReference type="BioGRID" id="130614">
    <property type="interactions" value="33"/>
</dbReference>
<dbReference type="FunCoup" id="Q3KNW1">
    <property type="interactions" value="11"/>
</dbReference>
<dbReference type="IntAct" id="Q3KNW1">
    <property type="interactions" value="5"/>
</dbReference>
<dbReference type="STRING" id="9606.ENSP00000327968"/>
<dbReference type="iPTMnet" id="Q3KNW1"/>
<dbReference type="PhosphoSitePlus" id="Q3KNW1"/>
<dbReference type="BioMuta" id="SNAI3"/>
<dbReference type="DMDM" id="121942538"/>
<dbReference type="jPOST" id="Q3KNW1"/>
<dbReference type="MassIVE" id="Q3KNW1"/>
<dbReference type="PaxDb" id="9606-ENSP00000327968"/>
<dbReference type="PeptideAtlas" id="Q3KNW1"/>
<dbReference type="ProteomicsDB" id="61707"/>
<dbReference type="Antibodypedia" id="17289">
    <property type="antibodies" value="123 antibodies from 26 providers"/>
</dbReference>
<dbReference type="DNASU" id="333929"/>
<dbReference type="Ensembl" id="ENST00000332281.6">
    <property type="protein sequence ID" value="ENSP00000327968.5"/>
    <property type="gene ID" value="ENSG00000185669.6"/>
</dbReference>
<dbReference type="GeneID" id="333929"/>
<dbReference type="KEGG" id="hsa:333929"/>
<dbReference type="MANE-Select" id="ENST00000332281.6">
    <property type="protein sequence ID" value="ENSP00000327968.5"/>
    <property type="RefSeq nucleotide sequence ID" value="NM_178310.4"/>
    <property type="RefSeq protein sequence ID" value="NP_840101.1"/>
</dbReference>
<dbReference type="UCSC" id="uc002flj.4">
    <property type="organism name" value="human"/>
</dbReference>
<dbReference type="AGR" id="HGNC:18411"/>
<dbReference type="CTD" id="333929"/>
<dbReference type="DisGeNET" id="333929"/>
<dbReference type="GeneCards" id="SNAI3"/>
<dbReference type="HGNC" id="HGNC:18411">
    <property type="gene designation" value="SNAI3"/>
</dbReference>
<dbReference type="HPA" id="ENSG00000185669">
    <property type="expression patterns" value="Tissue enriched (skeletal)"/>
</dbReference>
<dbReference type="MIM" id="612741">
    <property type="type" value="gene"/>
</dbReference>
<dbReference type="neXtProt" id="NX_Q3KNW1"/>
<dbReference type="OpenTargets" id="ENSG00000185669"/>
<dbReference type="PharmGKB" id="PA134988226"/>
<dbReference type="VEuPathDB" id="HostDB:ENSG00000185669"/>
<dbReference type="eggNOG" id="KOG2462">
    <property type="taxonomic scope" value="Eukaryota"/>
</dbReference>
<dbReference type="GeneTree" id="ENSGT00940000154511"/>
<dbReference type="HOGENOM" id="CLU_002678_42_3_1"/>
<dbReference type="InParanoid" id="Q3KNW1"/>
<dbReference type="OMA" id="PWDRSSA"/>
<dbReference type="OrthoDB" id="5428132at2759"/>
<dbReference type="PAN-GO" id="Q3KNW1">
    <property type="GO annotations" value="3 GO annotations based on evolutionary models"/>
</dbReference>
<dbReference type="PhylomeDB" id="Q3KNW1"/>
<dbReference type="TreeFam" id="TF315515"/>
<dbReference type="PathwayCommons" id="Q3KNW1"/>
<dbReference type="SignaLink" id="Q3KNW1"/>
<dbReference type="SIGNOR" id="Q3KNW1"/>
<dbReference type="BioGRID-ORCS" id="333929">
    <property type="hits" value="9 hits in 1177 CRISPR screens"/>
</dbReference>
<dbReference type="GenomeRNAi" id="333929"/>
<dbReference type="Pharos" id="Q3KNW1">
    <property type="development level" value="Tbio"/>
</dbReference>
<dbReference type="PRO" id="PR:Q3KNW1"/>
<dbReference type="Proteomes" id="UP000005640">
    <property type="component" value="Chromosome 16"/>
</dbReference>
<dbReference type="RNAct" id="Q3KNW1">
    <property type="molecule type" value="protein"/>
</dbReference>
<dbReference type="Bgee" id="ENSG00000185669">
    <property type="expression patterns" value="Expressed in skeletal muscle tissue of rectus abdominis and 97 other cell types or tissues"/>
</dbReference>
<dbReference type="GO" id="GO:0005634">
    <property type="term" value="C:nucleus"/>
    <property type="evidence" value="ECO:0007669"/>
    <property type="project" value="UniProtKB-SubCell"/>
</dbReference>
<dbReference type="GO" id="GO:0005667">
    <property type="term" value="C:transcription regulator complex"/>
    <property type="evidence" value="ECO:0007669"/>
    <property type="project" value="Ensembl"/>
</dbReference>
<dbReference type="GO" id="GO:0005507">
    <property type="term" value="F:copper ion binding"/>
    <property type="evidence" value="ECO:0007669"/>
    <property type="project" value="InterPro"/>
</dbReference>
<dbReference type="GO" id="GO:0000981">
    <property type="term" value="F:DNA-binding transcription factor activity, RNA polymerase II-specific"/>
    <property type="evidence" value="ECO:0000318"/>
    <property type="project" value="GO_Central"/>
</dbReference>
<dbReference type="GO" id="GO:0001227">
    <property type="term" value="F:DNA-binding transcription repressor activity, RNA polymerase II-specific"/>
    <property type="evidence" value="ECO:0007669"/>
    <property type="project" value="Ensembl"/>
</dbReference>
<dbReference type="GO" id="GO:0000978">
    <property type="term" value="F:RNA polymerase II cis-regulatory region sequence-specific DNA binding"/>
    <property type="evidence" value="ECO:0000318"/>
    <property type="project" value="GO_Central"/>
</dbReference>
<dbReference type="GO" id="GO:1990837">
    <property type="term" value="F:sequence-specific double-stranded DNA binding"/>
    <property type="evidence" value="ECO:0000314"/>
    <property type="project" value="ARUK-UCL"/>
</dbReference>
<dbReference type="GO" id="GO:0008270">
    <property type="term" value="F:zinc ion binding"/>
    <property type="evidence" value="ECO:0007669"/>
    <property type="project" value="UniProtKB-KW"/>
</dbReference>
<dbReference type="GO" id="GO:0006355">
    <property type="term" value="P:regulation of DNA-templated transcription"/>
    <property type="evidence" value="ECO:0000318"/>
    <property type="project" value="GO_Central"/>
</dbReference>
<dbReference type="FunFam" id="3.30.160.60:FF:000043">
    <property type="entry name" value="Scratch family zinc finger 2"/>
    <property type="match status" value="1"/>
</dbReference>
<dbReference type="FunFam" id="3.30.160.60:FF:000085">
    <property type="entry name" value="Snail zinc finger protein"/>
    <property type="match status" value="1"/>
</dbReference>
<dbReference type="FunFam" id="3.30.160.60:FF:000207">
    <property type="entry name" value="zinc finger protein SNAI2"/>
    <property type="match status" value="1"/>
</dbReference>
<dbReference type="FunFam" id="3.30.160.60:FF:001965">
    <property type="entry name" value="Zinc finger protein SNAI3"/>
    <property type="match status" value="1"/>
</dbReference>
<dbReference type="Gene3D" id="3.30.160.60">
    <property type="entry name" value="Classic Zinc Finger"/>
    <property type="match status" value="4"/>
</dbReference>
<dbReference type="InterPro" id="IPR002355">
    <property type="entry name" value="Cu_oxidase_Cu_BS"/>
</dbReference>
<dbReference type="InterPro" id="IPR050527">
    <property type="entry name" value="Snail/Krueppel_Znf"/>
</dbReference>
<dbReference type="InterPro" id="IPR036236">
    <property type="entry name" value="Znf_C2H2_sf"/>
</dbReference>
<dbReference type="InterPro" id="IPR013087">
    <property type="entry name" value="Znf_C2H2_type"/>
</dbReference>
<dbReference type="PANTHER" id="PTHR24388">
    <property type="entry name" value="ZINC FINGER PROTEIN"/>
    <property type="match status" value="1"/>
</dbReference>
<dbReference type="PANTHER" id="PTHR24388:SF40">
    <property type="entry name" value="ZINC FINGER PROTEIN SNAI3"/>
    <property type="match status" value="1"/>
</dbReference>
<dbReference type="Pfam" id="PF00096">
    <property type="entry name" value="zf-C2H2"/>
    <property type="match status" value="4"/>
</dbReference>
<dbReference type="SMART" id="SM00355">
    <property type="entry name" value="ZnF_C2H2"/>
    <property type="match status" value="5"/>
</dbReference>
<dbReference type="SUPFAM" id="SSF57667">
    <property type="entry name" value="beta-beta-alpha zinc fingers"/>
    <property type="match status" value="3"/>
</dbReference>
<dbReference type="PROSITE" id="PS00028">
    <property type="entry name" value="ZINC_FINGER_C2H2_1"/>
    <property type="match status" value="4"/>
</dbReference>
<dbReference type="PROSITE" id="PS50157">
    <property type="entry name" value="ZINC_FINGER_C2H2_2"/>
    <property type="match status" value="5"/>
</dbReference>
<proteinExistence type="evidence at protein level"/>